<protein>
    <recommendedName>
        <fullName>NADH-ubiquinone oxidoreductase chain 4</fullName>
        <ecNumber>7.1.1.2</ecNumber>
    </recommendedName>
    <alternativeName>
        <fullName>NADH dehydrogenase subunit 4</fullName>
    </alternativeName>
</protein>
<reference key="1">
    <citation type="journal article" date="2001" name="J. Bacteriol.">
        <title>Infrequent genetic exchange and recombination in the mitochondrial genome of Candida albicans.</title>
        <authorList>
            <person name="Anderson J.B."/>
            <person name="Wickens C."/>
            <person name="Khan M."/>
            <person name="Cowen L.E."/>
            <person name="Federspiel N.A."/>
            <person name="Jones T."/>
            <person name="Kohn L.M."/>
        </authorList>
    </citation>
    <scope>NUCLEOTIDE SEQUENCE [LARGE SCALE GENOMIC DNA]</scope>
    <source>
        <strain>SC5314 / ATCC MYA-2876</strain>
    </source>
</reference>
<feature type="chain" id="PRO_0000356878" description="NADH-ubiquinone oxidoreductase chain 4">
    <location>
        <begin position="1"/>
        <end position="464"/>
    </location>
</feature>
<feature type="transmembrane region" description="Helical" evidence="2">
    <location>
        <begin position="18"/>
        <end position="38"/>
    </location>
</feature>
<feature type="transmembrane region" description="Helical" evidence="2">
    <location>
        <begin position="54"/>
        <end position="74"/>
    </location>
</feature>
<feature type="transmembrane region" description="Helical" evidence="2">
    <location>
        <begin position="79"/>
        <end position="99"/>
    </location>
</feature>
<feature type="transmembrane region" description="Helical" evidence="2">
    <location>
        <begin position="102"/>
        <end position="122"/>
    </location>
</feature>
<feature type="transmembrane region" description="Helical" evidence="2">
    <location>
        <begin position="131"/>
        <end position="151"/>
    </location>
</feature>
<feature type="transmembrane region" description="Helical" evidence="2">
    <location>
        <begin position="168"/>
        <end position="188"/>
    </location>
</feature>
<feature type="transmembrane region" description="Helical" evidence="2">
    <location>
        <begin position="207"/>
        <end position="227"/>
    </location>
</feature>
<feature type="transmembrane region" description="Helical" evidence="2">
    <location>
        <begin position="239"/>
        <end position="259"/>
    </location>
</feature>
<feature type="transmembrane region" description="Helical" evidence="2">
    <location>
        <begin position="266"/>
        <end position="286"/>
    </location>
</feature>
<feature type="transmembrane region" description="Helical" evidence="2">
    <location>
        <begin position="297"/>
        <end position="317"/>
    </location>
</feature>
<feature type="transmembrane region" description="Helical" evidence="2">
    <location>
        <begin position="332"/>
        <end position="352"/>
    </location>
</feature>
<feature type="transmembrane region" description="Helical" evidence="2">
    <location>
        <begin position="375"/>
        <end position="395"/>
    </location>
</feature>
<feature type="transmembrane region" description="Helical" evidence="2">
    <location>
        <begin position="420"/>
        <end position="440"/>
    </location>
</feature>
<name>NU4M_CANAL</name>
<organism>
    <name type="scientific">Candida albicans (strain SC5314 / ATCC MYA-2876)</name>
    <name type="common">Yeast</name>
    <dbReference type="NCBI Taxonomy" id="237561"/>
    <lineage>
        <taxon>Eukaryota</taxon>
        <taxon>Fungi</taxon>
        <taxon>Dikarya</taxon>
        <taxon>Ascomycota</taxon>
        <taxon>Saccharomycotina</taxon>
        <taxon>Pichiomycetes</taxon>
        <taxon>Debaryomycetaceae</taxon>
        <taxon>Candida/Lodderomyces clade</taxon>
        <taxon>Candida</taxon>
    </lineage>
</organism>
<evidence type="ECO:0000250" key="1"/>
<evidence type="ECO:0000255" key="2"/>
<evidence type="ECO:0000305" key="3"/>
<evidence type="ECO:0000312" key="4">
    <source>
        <dbReference type="CGD" id="CAL0000192075"/>
    </source>
</evidence>
<sequence>MTLIYILILAGVSIFSRLLPTYGKGLILVASILVVLPTMTDWEEVGIYYTSDGIADIFILLTAYLLPLSIIANWNNIRSLLYFELILNLGVILLINFMCQDMLSFYVYFEISLAPLFILIGLYGANNRDKAADYILIYTLFSSLFMLLAIGTYEVLIGNTDYQAVSLVVLSTDLQCILFLCISAGIMVKTPLVPVHTWLPVVHSESPLAGSMLLAGVILKLAVYAIIRLIIPTLSDATVLYTPVVYVICAITIIYTSIITLRQTDLKVIVAYSSISHMAVCILGILSNSLAGINGSLILSLAHGFVSPALFIIVGGILYDRYHHRLIYYYQGLLTYMPILAIYLLILSFSNIGTPLTVNFIGELLSLTGAIGRSTILGCISAFSVLLSAAYMLKVTNRLTGGIRTPYTALTSDCTYRESLLMIALIIPTLWYGLYPNGIINMIWQGSKLLYIFVITQYNVIGNI</sequence>
<keyword id="KW-0249">Electron transport</keyword>
<keyword id="KW-0472">Membrane</keyword>
<keyword id="KW-0496">Mitochondrion</keyword>
<keyword id="KW-0520">NAD</keyword>
<keyword id="KW-1185">Reference proteome</keyword>
<keyword id="KW-0679">Respiratory chain</keyword>
<keyword id="KW-1278">Translocase</keyword>
<keyword id="KW-0812">Transmembrane</keyword>
<keyword id="KW-1133">Transmembrane helix</keyword>
<keyword id="KW-0813">Transport</keyword>
<keyword id="KW-0830">Ubiquinone</keyword>
<accession>Q9B8C8</accession>
<gene>
    <name type="primary">NAD4</name>
    <name evidence="4" type="ordered locus">CM_00440W</name>
    <name type="ORF">CaalfMp14</name>
</gene>
<geneLocation type="mitochondrion"/>
<proteinExistence type="inferred from homology"/>
<dbReference type="EC" id="7.1.1.2"/>
<dbReference type="EMBL" id="AF285261">
    <property type="protein sequence ID" value="AAG59598.2"/>
    <property type="molecule type" value="Genomic_DNA"/>
</dbReference>
<dbReference type="RefSeq" id="NP_075041.2">
    <property type="nucleotide sequence ID" value="NC_002653.1"/>
</dbReference>
<dbReference type="SMR" id="Q9B8C8"/>
<dbReference type="STRING" id="237561.Q9B8C8"/>
<dbReference type="EnsemblFungi" id="CM_00440W-T">
    <property type="protein sequence ID" value="CM_00440W-T-p1"/>
    <property type="gene ID" value="CM_00440W"/>
</dbReference>
<dbReference type="GeneID" id="802562"/>
<dbReference type="KEGG" id="cal:CaalfMp14"/>
<dbReference type="CGD" id="CAL0000192075">
    <property type="gene designation" value="NAD4"/>
</dbReference>
<dbReference type="VEuPathDB" id="FungiDB:CM_00440W"/>
<dbReference type="InParanoid" id="Q9B8C8"/>
<dbReference type="Proteomes" id="UP000000559">
    <property type="component" value="Mitochondrion"/>
</dbReference>
<dbReference type="GO" id="GO:0031966">
    <property type="term" value="C:mitochondrial membrane"/>
    <property type="evidence" value="ECO:0007669"/>
    <property type="project" value="UniProtKB-SubCell"/>
</dbReference>
<dbReference type="GO" id="GO:0045271">
    <property type="term" value="C:respiratory chain complex I"/>
    <property type="evidence" value="ECO:0000250"/>
    <property type="project" value="CGD"/>
</dbReference>
<dbReference type="GO" id="GO:0008137">
    <property type="term" value="F:NADH dehydrogenase (ubiquinone) activity"/>
    <property type="evidence" value="ECO:0000250"/>
    <property type="project" value="CGD"/>
</dbReference>
<dbReference type="GO" id="GO:0048039">
    <property type="term" value="F:ubiquinone binding"/>
    <property type="evidence" value="ECO:0000318"/>
    <property type="project" value="GO_Central"/>
</dbReference>
<dbReference type="GO" id="GO:0009060">
    <property type="term" value="P:aerobic respiration"/>
    <property type="evidence" value="ECO:0000318"/>
    <property type="project" value="GO_Central"/>
</dbReference>
<dbReference type="GO" id="GO:0015990">
    <property type="term" value="P:electron transport coupled proton transport"/>
    <property type="evidence" value="ECO:0000318"/>
    <property type="project" value="GO_Central"/>
</dbReference>
<dbReference type="GO" id="GO:0006120">
    <property type="term" value="P:mitochondrial electron transport, NADH to ubiquinone"/>
    <property type="evidence" value="ECO:0000250"/>
    <property type="project" value="CGD"/>
</dbReference>
<dbReference type="InterPro" id="IPR010227">
    <property type="entry name" value="NADH_Q_OxRdtase_chainM/4"/>
</dbReference>
<dbReference type="InterPro" id="IPR003918">
    <property type="entry name" value="NADH_UbQ_OxRdtase"/>
</dbReference>
<dbReference type="InterPro" id="IPR001750">
    <property type="entry name" value="ND/Mrp_TM"/>
</dbReference>
<dbReference type="NCBIfam" id="TIGR01972">
    <property type="entry name" value="NDH_I_M"/>
    <property type="match status" value="1"/>
</dbReference>
<dbReference type="PANTHER" id="PTHR43507">
    <property type="entry name" value="NADH-UBIQUINONE OXIDOREDUCTASE CHAIN 4"/>
    <property type="match status" value="1"/>
</dbReference>
<dbReference type="PANTHER" id="PTHR43507:SF1">
    <property type="entry name" value="NADH-UBIQUINONE OXIDOREDUCTASE CHAIN 4"/>
    <property type="match status" value="1"/>
</dbReference>
<dbReference type="Pfam" id="PF00361">
    <property type="entry name" value="Proton_antipo_M"/>
    <property type="match status" value="1"/>
</dbReference>
<dbReference type="PRINTS" id="PR01437">
    <property type="entry name" value="NUOXDRDTASE4"/>
</dbReference>
<comment type="function">
    <text evidence="1">Core subunit of the mitochondrial membrane respiratory chain NADH dehydrogenase (Complex I) that is believed to belong to the minimal assembly required for catalysis. Complex I functions in the transfer of electrons from NADH to the respiratory chain. The immediate electron acceptor for the enzyme is believed to be ubiquinone (By similarity).</text>
</comment>
<comment type="catalytic activity">
    <reaction>
        <text>a ubiquinone + NADH + 5 H(+)(in) = a ubiquinol + NAD(+) + 4 H(+)(out)</text>
        <dbReference type="Rhea" id="RHEA:29091"/>
        <dbReference type="Rhea" id="RHEA-COMP:9565"/>
        <dbReference type="Rhea" id="RHEA-COMP:9566"/>
        <dbReference type="ChEBI" id="CHEBI:15378"/>
        <dbReference type="ChEBI" id="CHEBI:16389"/>
        <dbReference type="ChEBI" id="CHEBI:17976"/>
        <dbReference type="ChEBI" id="CHEBI:57540"/>
        <dbReference type="ChEBI" id="CHEBI:57945"/>
        <dbReference type="EC" id="7.1.1.2"/>
    </reaction>
</comment>
<comment type="subcellular location">
    <subcellularLocation>
        <location evidence="1">Mitochondrion membrane</location>
        <topology evidence="1">Multi-pass membrane protein</topology>
    </subcellularLocation>
</comment>
<comment type="similarity">
    <text evidence="3">Belongs to the complex I subunit 4 family.</text>
</comment>